<feature type="chain" id="PRO_0000027253" description="Capsid scaffolding protein">
    <location>
        <begin position="1"/>
        <end position="646"/>
    </location>
</feature>
<feature type="chain" id="PRO_0000027254" description="Assemblin" evidence="3">
    <location>
        <begin position="1"/>
        <end position="242"/>
    </location>
</feature>
<feature type="chain" id="PRO_0000027255" description="Assembly protein" evidence="3">
    <location>
        <begin position="243"/>
        <end position="646"/>
    </location>
</feature>
<feature type="region of interest" description="Interaction with pAP" evidence="3">
    <location>
        <begin position="336"/>
        <end position="355"/>
    </location>
</feature>
<feature type="region of interest" description="Disordered" evidence="4">
    <location>
        <begin position="421"/>
        <end position="483"/>
    </location>
</feature>
<feature type="region of interest" description="Interaction with major capsid protein" evidence="3">
    <location>
        <begin position="626"/>
        <end position="646"/>
    </location>
</feature>
<feature type="short sequence motif" description="Nuclear localization signal" evidence="1">
    <location>
        <begin position="445"/>
        <end position="451"/>
    </location>
</feature>
<feature type="compositionally biased region" description="Basic and acidic residues" evidence="4">
    <location>
        <begin position="452"/>
        <end position="462"/>
    </location>
</feature>
<feature type="compositionally biased region" description="Basic and acidic residues" evidence="4">
    <location>
        <begin position="471"/>
        <end position="480"/>
    </location>
</feature>
<feature type="active site" description="Charge relay system" evidence="3">
    <location>
        <position position="55"/>
    </location>
</feature>
<feature type="active site" description="Charge relay system" evidence="3">
    <location>
        <position position="123"/>
    </location>
</feature>
<feature type="active site" description="Charge relay system" evidence="3">
    <location>
        <position position="142"/>
    </location>
</feature>
<feature type="site" description="Cleavage; by assemblin; Release site" evidence="3">
    <location>
        <begin position="242"/>
        <end position="243"/>
    </location>
</feature>
<feature type="site" description="Cleavage; by assemblin; Maturation site" evidence="2">
    <location>
        <begin position="622"/>
        <end position="623"/>
    </location>
</feature>
<feature type="splice variant" id="VSP_037415" description="In isoform pAP." evidence="5">
    <location>
        <begin position="1"/>
        <end position="317"/>
    </location>
</feature>
<sequence length="646" mass="68580">MDAYTVDGNAVSLPIYVAGYIALYDMGDGGELTLTRETVAAALPPASRLPINIDHRNGCVVGEVLSIVDDARGPFFLGIINCPQLGAVLATAAGPDFFGELSEGLSEQERLLYLVSNYLPSASLSSRRLGPDEEPDETLFAHVSLCVIGRRVGTIVTYDATPENAVAPFKRLSPSSREELLITAREAQSRLGDAATWHLSEDTLTRVLLSTAVNNMLLRNRWNLVARRRREAGIEGHTYLQASASFGITNGCNKADFCGAELVDTCGYKSGEKVHGAPYSRVTLGAKAFTSSSPNALPSSDNDKGGIGERTQKHISAMASSNPQTLSAAGAPLVSGDYILVPAAQYNQLVVGQHTSHPPINAGPAPVTHAVPSQYIPPAYNSLMPPSMYQAPPYWSVPHSANLEAQITALVGALAADRKATKGSDPHVIQGSQCSPPLSPQQERRYARKRRHDWDATTRDDLEGIYYPGERSPRPGERRAGRPSTTIADLMGAVSSLQQEVSQLRAIQTVTAQPQAAPAGLYKPIPAVPPQYSQYQYIQPQHAVSAIVAPQLPGIPSQPTQAVLAPQVPAGEAPGSAKVVAASTAPQQAEQARAAPQQFEAVTSAAVLPVTQPQASSQTVDASASTGLEFGRDDADIFVSQMMSAR</sequence>
<comment type="function">
    <molecule>Capsid scaffolding protein</molecule>
    <text evidence="3">Acts as a scaffold protein by binding major capsid protein in the cytoplasm, inducing the nuclear localization of both proteins. Multimerizes in the nucleus such as major capsid protein forms the icosahedral T=16 capsid. Autocatalytic cleavage releases the assembly protein, and subsequently abolishes interaction with major capsid protein. Cleavages products are evicted from the capsid before or during DNA packaging.</text>
</comment>
<comment type="function">
    <molecule>Assemblin</molecule>
    <text evidence="3">Protease that plays an essential role in virion assembly within the nucleus. Catalyzes the cleavage of the assembly protein after formation of the spherical procapsid. By that cleavage, the capsid matures and gains its icosahedral shape. The cleavage sites seem to include -Ala-Ser-, -Ala-Ala-, as well as Ala-Thr bonds. Assemblin and cleavages products are evicted from the capsid before or during DNA packaging.</text>
</comment>
<comment type="function">
    <molecule>Assembly protein</molecule>
    <text evidence="3">Plays a major role in capsid assembly. Acts as a scaffold protein by binding major capsid protein. Multimerizes in the nucleus such as major capsid protein forms the icosahedral T=16 capsid. Cleaved by assemblin after capsid completion. The cleavages products are evicted from the capsid before or during DNA packaging.</text>
</comment>
<comment type="catalytic activity">
    <molecule>Assemblin</molecule>
    <reaction evidence="3">
        <text>Cleaves -Ala-|-Ser- and -Ala-|-Ala- bonds in the scaffold protein.</text>
        <dbReference type="EC" id="3.4.21.97"/>
    </reaction>
</comment>
<comment type="subunit">
    <molecule>Capsid scaffolding protein</molecule>
    <text evidence="3">Homomultimer. Interacts with major capsid protein.</text>
</comment>
<comment type="subunit">
    <molecule>Assemblin</molecule>
    <text evidence="3">Exists in a monomer-dimer equilibrium with the dimer being the active species.</text>
</comment>
<comment type="subunit">
    <molecule>Assembly protein</molecule>
    <text evidence="3">Homomultimer. Interacts with major capsid protein.</text>
</comment>
<comment type="subcellular location">
    <molecule>Capsid scaffolding protein</molecule>
    <subcellularLocation>
        <location evidence="3">Host cytoplasm</location>
    </subcellularLocation>
</comment>
<comment type="subcellular location">
    <molecule>Assemblin</molecule>
    <subcellularLocation>
        <location evidence="3">Host nucleus</location>
    </subcellularLocation>
</comment>
<comment type="subcellular location">
    <molecule>Assembly protein</molecule>
    <subcellularLocation>
        <location evidence="3">Host nucleus</location>
    </subcellularLocation>
</comment>
<comment type="alternative products">
    <event type="alternative promoter"/>
    <isoform>
        <id>P28936-1</id>
        <name>Capsid scaffolding protein</name>
        <name>pPR</name>
        <sequence type="displayed"/>
    </isoform>
    <isoform>
        <id>P28936-2</id>
        <name>pAP</name>
        <name>Assembly protein</name>
        <name>Gene 35.5 protein</name>
        <sequence type="described" ref="VSP_037415"/>
    </isoform>
</comment>
<comment type="domain">
    <text evidence="3">Region of interaction between pPR and pAP is called Amino conserved domain (ACD). The region of interaction with major capsid protein is called carboxyl conserved domain (CCD).</text>
</comment>
<comment type="PTM">
    <molecule>Capsid scaffolding protein</molecule>
    <text evidence="3">Capsid scaffolding protein is cleaved by assemblin after formation of the spherical procapsid. As a result, the capsid obtains its mature, icosahedral shape. Cleavages occur at two or more sites: release (R-site) and maturation (M-site).</text>
</comment>
<comment type="similarity">
    <text evidence="3">Belongs to the herpesviridae capsid scaffolding protein family.</text>
</comment>
<organismHost>
    <name type="scientific">Equus caballus</name>
    <name type="common">Horse</name>
    <dbReference type="NCBI Taxonomy" id="9796"/>
</organismHost>
<keyword id="KW-0877">Alternative promoter usage</keyword>
<keyword id="KW-1035">Host cytoplasm</keyword>
<keyword id="KW-1048">Host nucleus</keyword>
<keyword id="KW-0378">Hydrolase</keyword>
<keyword id="KW-0597">Phosphoprotein</keyword>
<keyword id="KW-0645">Protease</keyword>
<keyword id="KW-1185">Reference proteome</keyword>
<keyword id="KW-0720">Serine protease</keyword>
<keyword id="KW-0118">Viral capsid assembly</keyword>
<keyword id="KW-1188">Viral release from host cell</keyword>
<accession>P28936</accession>
<accession>Q69263</accession>
<accession>Q6S6T6</accession>
<accession>Q6S6T7</accession>
<dbReference type="EC" id="3.4.21.97" evidence="3"/>
<dbReference type="EMBL" id="AY665713">
    <property type="protein sequence ID" value="AAT67292.1"/>
    <property type="molecule type" value="Genomic_DNA"/>
</dbReference>
<dbReference type="EMBL" id="AY665713">
    <property type="protein sequence ID" value="AAT67293.1"/>
    <property type="molecule type" value="Genomic_DNA"/>
</dbReference>
<dbReference type="PIR" id="I36798">
    <property type="entry name" value="WZBEC8"/>
</dbReference>
<dbReference type="SMR" id="P28936"/>
<dbReference type="MEROPS" id="S14.001"/>
<dbReference type="MEROPS" id="S21.001"/>
<dbReference type="KEGG" id="vg:1487556"/>
<dbReference type="KEGG" id="vg:1487557"/>
<dbReference type="Proteomes" id="UP000001189">
    <property type="component" value="Segment"/>
</dbReference>
<dbReference type="GO" id="GO:0030430">
    <property type="term" value="C:host cell cytoplasm"/>
    <property type="evidence" value="ECO:0007669"/>
    <property type="project" value="UniProtKB-SubCell"/>
</dbReference>
<dbReference type="GO" id="GO:0042025">
    <property type="term" value="C:host cell nucleus"/>
    <property type="evidence" value="ECO:0007669"/>
    <property type="project" value="UniProtKB-SubCell"/>
</dbReference>
<dbReference type="GO" id="GO:0042802">
    <property type="term" value="F:identical protein binding"/>
    <property type="evidence" value="ECO:0007669"/>
    <property type="project" value="UniProtKB-UniRule"/>
</dbReference>
<dbReference type="GO" id="GO:0004252">
    <property type="term" value="F:serine-type endopeptidase activity"/>
    <property type="evidence" value="ECO:0007669"/>
    <property type="project" value="UniProtKB-UniRule"/>
</dbReference>
<dbReference type="GO" id="GO:0039708">
    <property type="term" value="P:nuclear capsid assembly"/>
    <property type="evidence" value="ECO:0007669"/>
    <property type="project" value="UniProtKB-ARBA"/>
</dbReference>
<dbReference type="GO" id="GO:0006508">
    <property type="term" value="P:proteolysis"/>
    <property type="evidence" value="ECO:0007669"/>
    <property type="project" value="UniProtKB-KW"/>
</dbReference>
<dbReference type="GO" id="GO:0019076">
    <property type="term" value="P:viral release from host cell"/>
    <property type="evidence" value="ECO:0007669"/>
    <property type="project" value="UniProtKB-UniRule"/>
</dbReference>
<dbReference type="Gene3D" id="3.20.16.10">
    <property type="entry name" value="Herpesvirus/Caudovirus protease domain"/>
    <property type="match status" value="1"/>
</dbReference>
<dbReference type="HAMAP" id="MF_04008">
    <property type="entry name" value="HSV_SCAF"/>
    <property type="match status" value="1"/>
</dbReference>
<dbReference type="InterPro" id="IPR035443">
    <property type="entry name" value="Herpes_virus_sf"/>
</dbReference>
<dbReference type="InterPro" id="IPR001847">
    <property type="entry name" value="Peptidase_S21"/>
</dbReference>
<dbReference type="Pfam" id="PF00716">
    <property type="entry name" value="Peptidase_S21"/>
    <property type="match status" value="1"/>
</dbReference>
<dbReference type="PRINTS" id="PR00236">
    <property type="entry name" value="HSVCAPSIDP40"/>
</dbReference>
<dbReference type="SUPFAM" id="SSF50789">
    <property type="entry name" value="Herpes virus serine proteinase, assemblin"/>
    <property type="match status" value="1"/>
</dbReference>
<proteinExistence type="inferred from homology"/>
<reference key="1">
    <citation type="journal article" date="1992" name="Virology">
        <title>The DNA sequence of equine herpesvirus-1.</title>
        <authorList>
            <person name="Telford E.A.R."/>
            <person name="Watson M.S."/>
            <person name="McBride K."/>
            <person name="Davison A.J."/>
        </authorList>
    </citation>
    <scope>NUCLEOTIDE SEQUENCE [LARGE SCALE GENOMIC DNA]</scope>
</reference>
<name>SCAF_EHV1B</name>
<organism>
    <name type="scientific">Equine herpesvirus 1 (strain Ab4p)</name>
    <name type="common">EHV-1</name>
    <name type="synonym">Equine abortion virus</name>
    <dbReference type="NCBI Taxonomy" id="31520"/>
    <lineage>
        <taxon>Viruses</taxon>
        <taxon>Duplodnaviria</taxon>
        <taxon>Heunggongvirae</taxon>
        <taxon>Peploviricota</taxon>
        <taxon>Herviviricetes</taxon>
        <taxon>Herpesvirales</taxon>
        <taxon>Orthoherpesviridae</taxon>
        <taxon>Alphaherpesvirinae</taxon>
        <taxon>Varicellovirus</taxon>
        <taxon>Varicellovirus equidalpha1</taxon>
        <taxon>Equid alphaherpesvirus 1</taxon>
    </lineage>
</organism>
<gene>
    <name type="primary">35</name>
</gene>
<protein>
    <recommendedName>
        <fullName evidence="3">Capsid scaffolding protein</fullName>
    </recommendedName>
    <alternativeName>
        <fullName>Capsid protein P40</fullName>
    </alternativeName>
    <alternativeName>
        <fullName evidence="3">Protease precursor</fullName>
        <shortName evidence="3">pPR</shortName>
    </alternativeName>
    <alternativeName>
        <fullName>Virion structural gene 35 protein</fullName>
    </alternativeName>
    <component>
        <recommendedName>
            <fullName evidence="3">Assemblin</fullName>
            <ecNumber evidence="3">3.4.21.97</ecNumber>
        </recommendedName>
        <alternativeName>
            <fullName>Capsid protein VP24</fullName>
        </alternativeName>
        <alternativeName>
            <fullName evidence="3">Protease</fullName>
            <shortName evidence="3">Pr</shortName>
        </alternativeName>
    </component>
    <component>
        <recommendedName>
            <fullName evidence="3">Assembly protein</fullName>
            <shortName evidence="3">AP</shortName>
        </recommendedName>
        <alternativeName>
            <fullName evidence="3">Capsid assembly protein</fullName>
        </alternativeName>
        <alternativeName>
            <fullName>Capsid protein VP22A</fullName>
        </alternativeName>
    </component>
</protein>
<evidence type="ECO:0000250" key="1"/>
<evidence type="ECO:0000250" key="2">
    <source>
        <dbReference type="UniProtKB" id="P16753"/>
    </source>
</evidence>
<evidence type="ECO:0000255" key="3">
    <source>
        <dbReference type="HAMAP-Rule" id="MF_04008"/>
    </source>
</evidence>
<evidence type="ECO:0000256" key="4">
    <source>
        <dbReference type="SAM" id="MobiDB-lite"/>
    </source>
</evidence>
<evidence type="ECO:0000305" key="5"/>